<sequence length="101" mass="10848">MITLGHMLALGAVLFAISLAGIFLNRKNVIVLLMSIELMLLSVNINFVGFSRQLGDPSGQLFVFFILTVAAAEAAIGLAILVTLFRTRRTINVGEVDSLKG</sequence>
<reference key="1">
    <citation type="journal article" date="2008" name="Genome Biol.">
        <title>The complete genome, comparative and functional analysis of Stenotrophomonas maltophilia reveals an organism heavily shielded by drug resistance determinants.</title>
        <authorList>
            <person name="Crossman L.C."/>
            <person name="Gould V.C."/>
            <person name="Dow J.M."/>
            <person name="Vernikos G.S."/>
            <person name="Okazaki A."/>
            <person name="Sebaihia M."/>
            <person name="Saunders D."/>
            <person name="Arrowsmith C."/>
            <person name="Carver T."/>
            <person name="Peters N."/>
            <person name="Adlem E."/>
            <person name="Kerhornou A."/>
            <person name="Lord A."/>
            <person name="Murphy L."/>
            <person name="Seeger K."/>
            <person name="Squares R."/>
            <person name="Rutter S."/>
            <person name="Quail M.A."/>
            <person name="Rajandream M.A."/>
            <person name="Harris D."/>
            <person name="Churcher C."/>
            <person name="Bentley S.D."/>
            <person name="Parkhill J."/>
            <person name="Thomson N.R."/>
            <person name="Avison M.B."/>
        </authorList>
    </citation>
    <scope>NUCLEOTIDE SEQUENCE [LARGE SCALE GENOMIC DNA]</scope>
    <source>
        <strain>K279a</strain>
    </source>
</reference>
<evidence type="ECO:0000255" key="1">
    <source>
        <dbReference type="HAMAP-Rule" id="MF_01456"/>
    </source>
</evidence>
<feature type="chain" id="PRO_5000342267" description="NADH-quinone oxidoreductase subunit K">
    <location>
        <begin position="1"/>
        <end position="101"/>
    </location>
</feature>
<feature type="transmembrane region" description="Helical" evidence="1">
    <location>
        <begin position="4"/>
        <end position="24"/>
    </location>
</feature>
<feature type="transmembrane region" description="Helical" evidence="1">
    <location>
        <begin position="30"/>
        <end position="50"/>
    </location>
</feature>
<feature type="transmembrane region" description="Helical" evidence="1">
    <location>
        <begin position="62"/>
        <end position="82"/>
    </location>
</feature>
<protein>
    <recommendedName>
        <fullName evidence="1">NADH-quinone oxidoreductase subunit K</fullName>
        <ecNumber evidence="1">7.1.1.-</ecNumber>
    </recommendedName>
    <alternativeName>
        <fullName evidence="1">NADH dehydrogenase I subunit K</fullName>
    </alternativeName>
    <alternativeName>
        <fullName evidence="1">NDH-1 subunit K</fullName>
    </alternativeName>
</protein>
<comment type="function">
    <text evidence="1">NDH-1 shuttles electrons from NADH, via FMN and iron-sulfur (Fe-S) centers, to quinones in the respiratory chain. The immediate electron acceptor for the enzyme in this species is believed to be ubiquinone. Couples the redox reaction to proton translocation (for every two electrons transferred, four hydrogen ions are translocated across the cytoplasmic membrane), and thus conserves the redox energy in a proton gradient.</text>
</comment>
<comment type="catalytic activity">
    <reaction evidence="1">
        <text>a quinone + NADH + 5 H(+)(in) = a quinol + NAD(+) + 4 H(+)(out)</text>
        <dbReference type="Rhea" id="RHEA:57888"/>
        <dbReference type="ChEBI" id="CHEBI:15378"/>
        <dbReference type="ChEBI" id="CHEBI:24646"/>
        <dbReference type="ChEBI" id="CHEBI:57540"/>
        <dbReference type="ChEBI" id="CHEBI:57945"/>
        <dbReference type="ChEBI" id="CHEBI:132124"/>
    </reaction>
</comment>
<comment type="subunit">
    <text evidence="1">NDH-1 is composed of 14 different subunits. Subunits NuoA, H, J, K, L, M, N constitute the membrane sector of the complex.</text>
</comment>
<comment type="subcellular location">
    <subcellularLocation>
        <location evidence="1">Cell inner membrane</location>
        <topology evidence="1">Multi-pass membrane protein</topology>
    </subcellularLocation>
</comment>
<comment type="similarity">
    <text evidence="1">Belongs to the complex I subunit 4L family.</text>
</comment>
<name>NUOK_STRMK</name>
<dbReference type="EC" id="7.1.1.-" evidence="1"/>
<dbReference type="EMBL" id="AM743169">
    <property type="protein sequence ID" value="CAQ46823.1"/>
    <property type="molecule type" value="Genomic_DNA"/>
</dbReference>
<dbReference type="RefSeq" id="WP_005410454.1">
    <property type="nucleotide sequence ID" value="NC_010943.1"/>
</dbReference>
<dbReference type="SMR" id="B2FN96"/>
<dbReference type="EnsemblBacteria" id="CAQ46823">
    <property type="protein sequence ID" value="CAQ46823"/>
    <property type="gene ID" value="Smlt3395"/>
</dbReference>
<dbReference type="GeneID" id="93834398"/>
<dbReference type="KEGG" id="sml:Smlt3395"/>
<dbReference type="eggNOG" id="COG0713">
    <property type="taxonomic scope" value="Bacteria"/>
</dbReference>
<dbReference type="HOGENOM" id="CLU_144724_2_0_6"/>
<dbReference type="Proteomes" id="UP000008840">
    <property type="component" value="Chromosome"/>
</dbReference>
<dbReference type="GO" id="GO:0030964">
    <property type="term" value="C:NADH dehydrogenase complex"/>
    <property type="evidence" value="ECO:0007669"/>
    <property type="project" value="TreeGrafter"/>
</dbReference>
<dbReference type="GO" id="GO:0005886">
    <property type="term" value="C:plasma membrane"/>
    <property type="evidence" value="ECO:0007669"/>
    <property type="project" value="UniProtKB-SubCell"/>
</dbReference>
<dbReference type="GO" id="GO:0050136">
    <property type="term" value="F:NADH:ubiquinone reductase (non-electrogenic) activity"/>
    <property type="evidence" value="ECO:0007669"/>
    <property type="project" value="UniProtKB-UniRule"/>
</dbReference>
<dbReference type="GO" id="GO:0048038">
    <property type="term" value="F:quinone binding"/>
    <property type="evidence" value="ECO:0007669"/>
    <property type="project" value="UniProtKB-KW"/>
</dbReference>
<dbReference type="GO" id="GO:0042773">
    <property type="term" value="P:ATP synthesis coupled electron transport"/>
    <property type="evidence" value="ECO:0007669"/>
    <property type="project" value="InterPro"/>
</dbReference>
<dbReference type="FunFam" id="1.10.287.3510:FF:000001">
    <property type="entry name" value="NADH-quinone oxidoreductase subunit K"/>
    <property type="match status" value="1"/>
</dbReference>
<dbReference type="Gene3D" id="1.10.287.3510">
    <property type="match status" value="1"/>
</dbReference>
<dbReference type="HAMAP" id="MF_01456">
    <property type="entry name" value="NDH1_NuoK"/>
    <property type="match status" value="1"/>
</dbReference>
<dbReference type="InterPro" id="IPR001133">
    <property type="entry name" value="NADH_UbQ_OxRdtase_chain4L/K"/>
</dbReference>
<dbReference type="InterPro" id="IPR039428">
    <property type="entry name" value="NUOK/Mnh_C1-like"/>
</dbReference>
<dbReference type="NCBIfam" id="NF004320">
    <property type="entry name" value="PRK05715.1-2"/>
    <property type="match status" value="1"/>
</dbReference>
<dbReference type="NCBIfam" id="NF004321">
    <property type="entry name" value="PRK05715.1-3"/>
    <property type="match status" value="1"/>
</dbReference>
<dbReference type="NCBIfam" id="NF004323">
    <property type="entry name" value="PRK05715.1-5"/>
    <property type="match status" value="1"/>
</dbReference>
<dbReference type="PANTHER" id="PTHR11434:SF21">
    <property type="entry name" value="NADH DEHYDROGENASE SUBUNIT 4L-RELATED"/>
    <property type="match status" value="1"/>
</dbReference>
<dbReference type="PANTHER" id="PTHR11434">
    <property type="entry name" value="NADH-UBIQUINONE OXIDOREDUCTASE SUBUNIT ND4L"/>
    <property type="match status" value="1"/>
</dbReference>
<dbReference type="Pfam" id="PF00420">
    <property type="entry name" value="Oxidored_q2"/>
    <property type="match status" value="1"/>
</dbReference>
<keyword id="KW-0997">Cell inner membrane</keyword>
<keyword id="KW-1003">Cell membrane</keyword>
<keyword id="KW-0472">Membrane</keyword>
<keyword id="KW-0520">NAD</keyword>
<keyword id="KW-0874">Quinone</keyword>
<keyword id="KW-1185">Reference proteome</keyword>
<keyword id="KW-1278">Translocase</keyword>
<keyword id="KW-0812">Transmembrane</keyword>
<keyword id="KW-1133">Transmembrane helix</keyword>
<keyword id="KW-0813">Transport</keyword>
<keyword id="KW-0830">Ubiquinone</keyword>
<proteinExistence type="inferred from homology"/>
<accession>B2FN96</accession>
<organism>
    <name type="scientific">Stenotrophomonas maltophilia (strain K279a)</name>
    <dbReference type="NCBI Taxonomy" id="522373"/>
    <lineage>
        <taxon>Bacteria</taxon>
        <taxon>Pseudomonadati</taxon>
        <taxon>Pseudomonadota</taxon>
        <taxon>Gammaproteobacteria</taxon>
        <taxon>Lysobacterales</taxon>
        <taxon>Lysobacteraceae</taxon>
        <taxon>Stenotrophomonas</taxon>
        <taxon>Stenotrophomonas maltophilia group</taxon>
    </lineage>
</organism>
<gene>
    <name evidence="1" type="primary">nuoK</name>
    <name type="ordered locus">Smlt3395</name>
</gene>